<evidence type="ECO:0000255" key="1">
    <source>
        <dbReference type="HAMAP-Rule" id="MF_00508"/>
    </source>
</evidence>
<evidence type="ECO:0000305" key="2"/>
<protein>
    <recommendedName>
        <fullName evidence="1">Small ribosomal subunit protein uS10</fullName>
    </recommendedName>
    <alternativeName>
        <fullName evidence="2">30S ribosomal protein S10</fullName>
    </alternativeName>
</protein>
<reference key="1">
    <citation type="submission" date="2009-05" db="EMBL/GenBank/DDBJ databases">
        <title>Complete sequence of Tolumonas auensis DSM 9187.</title>
        <authorList>
            <consortium name="US DOE Joint Genome Institute"/>
            <person name="Lucas S."/>
            <person name="Copeland A."/>
            <person name="Lapidus A."/>
            <person name="Glavina del Rio T."/>
            <person name="Tice H."/>
            <person name="Bruce D."/>
            <person name="Goodwin L."/>
            <person name="Pitluck S."/>
            <person name="Chertkov O."/>
            <person name="Brettin T."/>
            <person name="Detter J.C."/>
            <person name="Han C."/>
            <person name="Larimer F."/>
            <person name="Land M."/>
            <person name="Hauser L."/>
            <person name="Kyrpides N."/>
            <person name="Mikhailova N."/>
            <person name="Spring S."/>
            <person name="Beller H."/>
        </authorList>
    </citation>
    <scope>NUCLEOTIDE SEQUENCE [LARGE SCALE GENOMIC DNA]</scope>
    <source>
        <strain>DSM 9187 / NBRC 110442 / TA 4</strain>
    </source>
</reference>
<name>RS10_TOLAT</name>
<dbReference type="EMBL" id="CP001616">
    <property type="protein sequence ID" value="ACQ91728.1"/>
    <property type="molecule type" value="Genomic_DNA"/>
</dbReference>
<dbReference type="RefSeq" id="WP_005307944.1">
    <property type="nucleotide sequence ID" value="NC_012691.1"/>
</dbReference>
<dbReference type="SMR" id="C4L7S9"/>
<dbReference type="STRING" id="595494.Tola_0098"/>
<dbReference type="GeneID" id="97858393"/>
<dbReference type="KEGG" id="tau:Tola_0098"/>
<dbReference type="eggNOG" id="COG0051">
    <property type="taxonomic scope" value="Bacteria"/>
</dbReference>
<dbReference type="HOGENOM" id="CLU_122625_1_3_6"/>
<dbReference type="OrthoDB" id="9804464at2"/>
<dbReference type="Proteomes" id="UP000009073">
    <property type="component" value="Chromosome"/>
</dbReference>
<dbReference type="GO" id="GO:1990904">
    <property type="term" value="C:ribonucleoprotein complex"/>
    <property type="evidence" value="ECO:0007669"/>
    <property type="project" value="UniProtKB-KW"/>
</dbReference>
<dbReference type="GO" id="GO:0005840">
    <property type="term" value="C:ribosome"/>
    <property type="evidence" value="ECO:0007669"/>
    <property type="project" value="UniProtKB-KW"/>
</dbReference>
<dbReference type="GO" id="GO:0003735">
    <property type="term" value="F:structural constituent of ribosome"/>
    <property type="evidence" value="ECO:0007669"/>
    <property type="project" value="InterPro"/>
</dbReference>
<dbReference type="GO" id="GO:0000049">
    <property type="term" value="F:tRNA binding"/>
    <property type="evidence" value="ECO:0007669"/>
    <property type="project" value="UniProtKB-UniRule"/>
</dbReference>
<dbReference type="GO" id="GO:0006412">
    <property type="term" value="P:translation"/>
    <property type="evidence" value="ECO:0007669"/>
    <property type="project" value="UniProtKB-UniRule"/>
</dbReference>
<dbReference type="FunFam" id="3.30.70.600:FF:000001">
    <property type="entry name" value="30S ribosomal protein S10"/>
    <property type="match status" value="1"/>
</dbReference>
<dbReference type="Gene3D" id="3.30.70.600">
    <property type="entry name" value="Ribosomal protein S10 domain"/>
    <property type="match status" value="1"/>
</dbReference>
<dbReference type="HAMAP" id="MF_00508">
    <property type="entry name" value="Ribosomal_uS10"/>
    <property type="match status" value="1"/>
</dbReference>
<dbReference type="InterPro" id="IPR001848">
    <property type="entry name" value="Ribosomal_uS10"/>
</dbReference>
<dbReference type="InterPro" id="IPR018268">
    <property type="entry name" value="Ribosomal_uS10_CS"/>
</dbReference>
<dbReference type="InterPro" id="IPR027486">
    <property type="entry name" value="Ribosomal_uS10_dom"/>
</dbReference>
<dbReference type="InterPro" id="IPR036838">
    <property type="entry name" value="Ribosomal_uS10_dom_sf"/>
</dbReference>
<dbReference type="NCBIfam" id="NF001861">
    <property type="entry name" value="PRK00596.1"/>
    <property type="match status" value="1"/>
</dbReference>
<dbReference type="NCBIfam" id="TIGR01049">
    <property type="entry name" value="rpsJ_bact"/>
    <property type="match status" value="1"/>
</dbReference>
<dbReference type="PANTHER" id="PTHR11700">
    <property type="entry name" value="30S RIBOSOMAL PROTEIN S10 FAMILY MEMBER"/>
    <property type="match status" value="1"/>
</dbReference>
<dbReference type="Pfam" id="PF00338">
    <property type="entry name" value="Ribosomal_S10"/>
    <property type="match status" value="1"/>
</dbReference>
<dbReference type="PRINTS" id="PR00971">
    <property type="entry name" value="RIBOSOMALS10"/>
</dbReference>
<dbReference type="SMART" id="SM01403">
    <property type="entry name" value="Ribosomal_S10"/>
    <property type="match status" value="1"/>
</dbReference>
<dbReference type="SUPFAM" id="SSF54999">
    <property type="entry name" value="Ribosomal protein S10"/>
    <property type="match status" value="1"/>
</dbReference>
<dbReference type="PROSITE" id="PS00361">
    <property type="entry name" value="RIBOSOMAL_S10"/>
    <property type="match status" value="1"/>
</dbReference>
<comment type="function">
    <text evidence="1">Involved in the binding of tRNA to the ribosomes.</text>
</comment>
<comment type="subunit">
    <text evidence="1">Part of the 30S ribosomal subunit.</text>
</comment>
<comment type="similarity">
    <text evidence="1">Belongs to the universal ribosomal protein uS10 family.</text>
</comment>
<feature type="chain" id="PRO_1000206605" description="Small ribosomal subunit protein uS10">
    <location>
        <begin position="1"/>
        <end position="103"/>
    </location>
</feature>
<gene>
    <name evidence="1" type="primary">rpsJ</name>
    <name type="ordered locus">Tola_0098</name>
</gene>
<keyword id="KW-1185">Reference proteome</keyword>
<keyword id="KW-0687">Ribonucleoprotein</keyword>
<keyword id="KW-0689">Ribosomal protein</keyword>
<sequence>MQNQRIRIRLKAFDHRLIDQSTAEIVETAKRTGAQVRGPIPLPTRKERFTVLISPHVNKDARDQYEIRTHKRLVDIVEPTDKTVDALMRLDLAAGVDVQISLG</sequence>
<organism>
    <name type="scientific">Tolumonas auensis (strain DSM 9187 / NBRC 110442 / TA 4)</name>
    <dbReference type="NCBI Taxonomy" id="595494"/>
    <lineage>
        <taxon>Bacteria</taxon>
        <taxon>Pseudomonadati</taxon>
        <taxon>Pseudomonadota</taxon>
        <taxon>Gammaproteobacteria</taxon>
        <taxon>Aeromonadales</taxon>
        <taxon>Aeromonadaceae</taxon>
        <taxon>Tolumonas</taxon>
    </lineage>
</organism>
<accession>C4L7S9</accession>
<proteinExistence type="inferred from homology"/>